<keyword id="KW-0963">Cytoplasm</keyword>
<keyword id="KW-0385">Hypusine</keyword>
<keyword id="KW-0396">Initiation factor</keyword>
<keyword id="KW-0648">Protein biosynthesis</keyword>
<sequence>MKQQVEVKELKEGKYVLADDEPCVIKSIQKSKPGKHGSAKARIEAIGIFDGQKRSIISSVSAKTYVPIVERKSAQVLSISSNIAQLMDMETYTTFELTIPEDYKDRVTEGKDITYIEAMGKMKIDLR</sequence>
<dbReference type="EMBL" id="CP000300">
    <property type="protein sequence ID" value="ABE52779.1"/>
    <property type="molecule type" value="Genomic_DNA"/>
</dbReference>
<dbReference type="RefSeq" id="WP_011499922.1">
    <property type="nucleotide sequence ID" value="NC_007955.1"/>
</dbReference>
<dbReference type="SMR" id="Q12UU7"/>
<dbReference type="STRING" id="259564.Mbur_1897"/>
<dbReference type="GeneID" id="3997689"/>
<dbReference type="KEGG" id="mbu:Mbur_1897"/>
<dbReference type="HOGENOM" id="CLU_102600_3_0_2"/>
<dbReference type="OrthoDB" id="23689at2157"/>
<dbReference type="Proteomes" id="UP000001979">
    <property type="component" value="Chromosome"/>
</dbReference>
<dbReference type="GO" id="GO:0005737">
    <property type="term" value="C:cytoplasm"/>
    <property type="evidence" value="ECO:0007669"/>
    <property type="project" value="UniProtKB-SubCell"/>
</dbReference>
<dbReference type="GO" id="GO:0043022">
    <property type="term" value="F:ribosome binding"/>
    <property type="evidence" value="ECO:0007669"/>
    <property type="project" value="InterPro"/>
</dbReference>
<dbReference type="GO" id="GO:0003723">
    <property type="term" value="F:RNA binding"/>
    <property type="evidence" value="ECO:0007669"/>
    <property type="project" value="InterPro"/>
</dbReference>
<dbReference type="GO" id="GO:0003746">
    <property type="term" value="F:translation elongation factor activity"/>
    <property type="evidence" value="ECO:0007669"/>
    <property type="project" value="InterPro"/>
</dbReference>
<dbReference type="GO" id="GO:0003743">
    <property type="term" value="F:translation initiation factor activity"/>
    <property type="evidence" value="ECO:0007669"/>
    <property type="project" value="UniProtKB-UniRule"/>
</dbReference>
<dbReference type="GO" id="GO:0045901">
    <property type="term" value="P:positive regulation of translational elongation"/>
    <property type="evidence" value="ECO:0007669"/>
    <property type="project" value="InterPro"/>
</dbReference>
<dbReference type="GO" id="GO:0045905">
    <property type="term" value="P:positive regulation of translational termination"/>
    <property type="evidence" value="ECO:0007669"/>
    <property type="project" value="InterPro"/>
</dbReference>
<dbReference type="CDD" id="cd04467">
    <property type="entry name" value="S1_aIF5A"/>
    <property type="match status" value="1"/>
</dbReference>
<dbReference type="FunFam" id="2.30.30.30:FF:000038">
    <property type="entry name" value="Translation initiation factor 5A"/>
    <property type="match status" value="1"/>
</dbReference>
<dbReference type="Gene3D" id="2.30.30.30">
    <property type="match status" value="1"/>
</dbReference>
<dbReference type="Gene3D" id="2.40.50.140">
    <property type="entry name" value="Nucleic acid-binding proteins"/>
    <property type="match status" value="1"/>
</dbReference>
<dbReference type="HAMAP" id="MF_00085">
    <property type="entry name" value="eIF_5A"/>
    <property type="match status" value="1"/>
</dbReference>
<dbReference type="InterPro" id="IPR001884">
    <property type="entry name" value="IF5A-like"/>
</dbReference>
<dbReference type="InterPro" id="IPR048670">
    <property type="entry name" value="IF5A-like_N"/>
</dbReference>
<dbReference type="InterPro" id="IPR012340">
    <property type="entry name" value="NA-bd_OB-fold"/>
</dbReference>
<dbReference type="InterPro" id="IPR014722">
    <property type="entry name" value="Rib_uL2_dom2"/>
</dbReference>
<dbReference type="InterPro" id="IPR019769">
    <property type="entry name" value="Trans_elong_IF5A_hypusine_site"/>
</dbReference>
<dbReference type="InterPro" id="IPR022847">
    <property type="entry name" value="Transl_elong_IF5A_arc"/>
</dbReference>
<dbReference type="InterPro" id="IPR020189">
    <property type="entry name" value="Transl_elong_IF5A_C"/>
</dbReference>
<dbReference type="InterPro" id="IPR008991">
    <property type="entry name" value="Translation_prot_SH3-like_sf"/>
</dbReference>
<dbReference type="NCBIfam" id="TIGR00037">
    <property type="entry name" value="eIF_5A"/>
    <property type="match status" value="1"/>
</dbReference>
<dbReference type="NCBIfam" id="NF003076">
    <property type="entry name" value="PRK03999.1"/>
    <property type="match status" value="1"/>
</dbReference>
<dbReference type="PANTHER" id="PTHR11673">
    <property type="entry name" value="TRANSLATION INITIATION FACTOR 5A FAMILY MEMBER"/>
    <property type="match status" value="1"/>
</dbReference>
<dbReference type="Pfam" id="PF01287">
    <property type="entry name" value="eIF-5a"/>
    <property type="match status" value="1"/>
</dbReference>
<dbReference type="Pfam" id="PF21485">
    <property type="entry name" value="IF5A-like_N"/>
    <property type="match status" value="1"/>
</dbReference>
<dbReference type="PIRSF" id="PIRSF003025">
    <property type="entry name" value="eIF5A"/>
    <property type="match status" value="1"/>
</dbReference>
<dbReference type="SMART" id="SM01376">
    <property type="entry name" value="eIF-5a"/>
    <property type="match status" value="1"/>
</dbReference>
<dbReference type="SUPFAM" id="SSF50249">
    <property type="entry name" value="Nucleic acid-binding proteins"/>
    <property type="match status" value="1"/>
</dbReference>
<dbReference type="SUPFAM" id="SSF50104">
    <property type="entry name" value="Translation proteins SH3-like domain"/>
    <property type="match status" value="1"/>
</dbReference>
<dbReference type="PROSITE" id="PS00302">
    <property type="entry name" value="IF5A_HYPUSINE"/>
    <property type="match status" value="1"/>
</dbReference>
<evidence type="ECO:0000255" key="1">
    <source>
        <dbReference type="HAMAP-Rule" id="MF_00085"/>
    </source>
</evidence>
<comment type="function">
    <text evidence="1">Functions by promoting the formation of the first peptide bond.</text>
</comment>
<comment type="subcellular location">
    <subcellularLocation>
        <location evidence="1">Cytoplasm</location>
    </subcellularLocation>
</comment>
<comment type="similarity">
    <text evidence="1">Belongs to the eIF-5A family.</text>
</comment>
<feature type="chain" id="PRO_0000259435" description="Translation initiation factor 5A">
    <location>
        <begin position="1"/>
        <end position="127"/>
    </location>
</feature>
<feature type="modified residue" description="Hypusine" evidence="1">
    <location>
        <position position="35"/>
    </location>
</feature>
<name>IF5A_METBU</name>
<gene>
    <name evidence="1" type="primary">eif5a</name>
    <name type="ordered locus">Mbur_1897</name>
</gene>
<organism>
    <name type="scientific">Methanococcoides burtonii (strain DSM 6242 / NBRC 107633 / OCM 468 / ACE-M)</name>
    <dbReference type="NCBI Taxonomy" id="259564"/>
    <lineage>
        <taxon>Archaea</taxon>
        <taxon>Methanobacteriati</taxon>
        <taxon>Methanobacteriota</taxon>
        <taxon>Stenosarchaea group</taxon>
        <taxon>Methanomicrobia</taxon>
        <taxon>Methanosarcinales</taxon>
        <taxon>Methanosarcinaceae</taxon>
        <taxon>Methanococcoides</taxon>
    </lineage>
</organism>
<protein>
    <recommendedName>
        <fullName evidence="1">Translation initiation factor 5A</fullName>
    </recommendedName>
    <alternativeName>
        <fullName evidence="1">Hypusine-containing protein</fullName>
    </alternativeName>
    <alternativeName>
        <fullName evidence="1">eIF-5A</fullName>
    </alternativeName>
</protein>
<proteinExistence type="inferred from homology"/>
<accession>Q12UU7</accession>
<reference key="1">
    <citation type="journal article" date="2009" name="ISME J.">
        <title>The genome sequence of the psychrophilic archaeon, Methanococcoides burtonii: the role of genome evolution in cold adaptation.</title>
        <authorList>
            <person name="Allen M.A."/>
            <person name="Lauro F.M."/>
            <person name="Williams T.J."/>
            <person name="Burg D."/>
            <person name="Siddiqui K.S."/>
            <person name="De Francisci D."/>
            <person name="Chong K.W."/>
            <person name="Pilak O."/>
            <person name="Chew H.H."/>
            <person name="De Maere M.Z."/>
            <person name="Ting L."/>
            <person name="Katrib M."/>
            <person name="Ng C."/>
            <person name="Sowers K.R."/>
            <person name="Galperin M.Y."/>
            <person name="Anderson I.J."/>
            <person name="Ivanova N."/>
            <person name="Dalin E."/>
            <person name="Martinez M."/>
            <person name="Lapidus A."/>
            <person name="Hauser L."/>
            <person name="Land M."/>
            <person name="Thomas T."/>
            <person name="Cavicchioli R."/>
        </authorList>
    </citation>
    <scope>NUCLEOTIDE SEQUENCE [LARGE SCALE GENOMIC DNA]</scope>
    <source>
        <strain>DSM 6242 / NBRC 107633 / OCM 468 / ACE-M</strain>
    </source>
</reference>